<comment type="function">
    <text evidence="1 2">Plays an essential role in the homeostatic regulation of sphingolipid de novo biosynthesis by modulating the activity of the serine palmitoyltransferase (SPT) in response to ceramide levels (By similarity). When complexed to SPT, the binding of ceramides to its N-terminus stabilizes a conformation that block SPT substrate entry, hence preventing SPT catalytic activity. Through this mechanism, maintains ceramide levels at sufficient concentrations for the production of complex sphingolipids, but which prevents the accumulation of ceramides to levels that trigger apoptosis (By similarity).</text>
</comment>
<comment type="subunit">
    <text evidence="1">Ceramide-sensitive subunit of the serine palmitoyltransferase (SPT) complex, which is also composed of SPTLC1, SPTLC2/3 and SPTSSA/B.</text>
</comment>
<comment type="subcellular location">
    <subcellularLocation>
        <location evidence="1">Endoplasmic reticulum membrane</location>
        <topology evidence="1">Multi-pass membrane protein</topology>
    </subcellularLocation>
</comment>
<comment type="domain">
    <text evidence="2">Ceramides bind to ORMDL3 N-terminus and stabilize it in a conformation that physically restricts the accessibility of the substrates to their binding sites in the serine palmitoyltransferase (SPT) complex, hence inhibiting SPT catalytic activity. In the absence of ceramides, the N-terminus is flexible and permits substrate binding, thus liberating SPT from inhibition.</text>
</comment>
<comment type="similarity">
    <text evidence="4">Belongs to the ORM family.</text>
</comment>
<sequence length="153" mass="17404">MNVGVAHSEVNPNTRVMNSRGIWLAYIILVGLLHVVLLSIPFFSIPVVWTLTNVIHNLVMYVFLHTVKGTPFETPDQGKARLLTHWEQMDYGLQFTSSRKFLSISPIVLYLLASFYTKYDAAHFLINTASLLSVLLPKLPQFHGVRLFGINKY</sequence>
<accession>Q5E972</accession>
<accession>Q32KP3</accession>
<dbReference type="EMBL" id="BT021048">
    <property type="protein sequence ID" value="AAX09065.1"/>
    <property type="molecule type" value="mRNA"/>
</dbReference>
<dbReference type="EMBL" id="BC109992">
    <property type="protein sequence ID" value="AAI09993.1"/>
    <property type="molecule type" value="mRNA"/>
</dbReference>
<dbReference type="RefSeq" id="NP_001014931.1">
    <property type="nucleotide sequence ID" value="NM_001014931.1"/>
</dbReference>
<dbReference type="RefSeq" id="XP_005206638.1">
    <property type="nucleotide sequence ID" value="XM_005206581.4"/>
</dbReference>
<dbReference type="RefSeq" id="XP_005206639.1">
    <property type="nucleotide sequence ID" value="XM_005206582.5"/>
</dbReference>
<dbReference type="SMR" id="Q5E972"/>
<dbReference type="FunCoup" id="Q5E972">
    <property type="interactions" value="2977"/>
</dbReference>
<dbReference type="STRING" id="9913.ENSBTAP00000027540"/>
<dbReference type="PaxDb" id="9913-ENSBTAP00000027540"/>
<dbReference type="Ensembl" id="ENSBTAT00000027540.4">
    <property type="protein sequence ID" value="ENSBTAP00000027540.3"/>
    <property type="gene ID" value="ENSBTAG00000020663.4"/>
</dbReference>
<dbReference type="GeneID" id="515878"/>
<dbReference type="KEGG" id="bta:515878"/>
<dbReference type="CTD" id="29095"/>
<dbReference type="VEuPathDB" id="HostDB:ENSBTAG00000020663"/>
<dbReference type="VGNC" id="VGNC:32453">
    <property type="gene designation" value="ORMDL2"/>
</dbReference>
<dbReference type="eggNOG" id="KOG3319">
    <property type="taxonomic scope" value="Eukaryota"/>
</dbReference>
<dbReference type="GeneTree" id="ENSGT00950000183178"/>
<dbReference type="HOGENOM" id="CLU_072117_3_0_1"/>
<dbReference type="InParanoid" id="Q5E972"/>
<dbReference type="OMA" id="STHYTHF"/>
<dbReference type="OrthoDB" id="1932233at2759"/>
<dbReference type="TreeFam" id="TF323369"/>
<dbReference type="Reactome" id="R-BTA-1660661">
    <property type="pathway name" value="Sphingolipid de novo biosynthesis"/>
</dbReference>
<dbReference type="Proteomes" id="UP000009136">
    <property type="component" value="Chromosome 5"/>
</dbReference>
<dbReference type="Bgee" id="ENSBTAG00000020663">
    <property type="expression patterns" value="Expressed in oviduct epithelium and 102 other cell types or tissues"/>
</dbReference>
<dbReference type="GO" id="GO:0005783">
    <property type="term" value="C:endoplasmic reticulum"/>
    <property type="evidence" value="ECO:0000250"/>
    <property type="project" value="UniProtKB"/>
</dbReference>
<dbReference type="GO" id="GO:0005789">
    <property type="term" value="C:endoplasmic reticulum membrane"/>
    <property type="evidence" value="ECO:0007669"/>
    <property type="project" value="UniProtKB-SubCell"/>
</dbReference>
<dbReference type="GO" id="GO:0017059">
    <property type="term" value="C:serine palmitoyltransferase complex"/>
    <property type="evidence" value="ECO:0000318"/>
    <property type="project" value="GO_Central"/>
</dbReference>
<dbReference type="GO" id="GO:0006672">
    <property type="term" value="P:ceramide metabolic process"/>
    <property type="evidence" value="ECO:0000250"/>
    <property type="project" value="UniProtKB"/>
</dbReference>
<dbReference type="GO" id="GO:0090156">
    <property type="term" value="P:intracellular sphingolipid homeostasis"/>
    <property type="evidence" value="ECO:0000318"/>
    <property type="project" value="GO_Central"/>
</dbReference>
<dbReference type="GO" id="GO:1900060">
    <property type="term" value="P:negative regulation of ceramide biosynthetic process"/>
    <property type="evidence" value="ECO:0007669"/>
    <property type="project" value="Ensembl"/>
</dbReference>
<dbReference type="GO" id="GO:0030148">
    <property type="term" value="P:sphingolipid biosynthetic process"/>
    <property type="evidence" value="ECO:0000318"/>
    <property type="project" value="GO_Central"/>
</dbReference>
<dbReference type="InterPro" id="IPR007203">
    <property type="entry name" value="ORMDL"/>
</dbReference>
<dbReference type="PANTHER" id="PTHR12665">
    <property type="entry name" value="ORMDL PROTEINS"/>
    <property type="match status" value="1"/>
</dbReference>
<dbReference type="Pfam" id="PF04061">
    <property type="entry name" value="ORMDL"/>
    <property type="match status" value="1"/>
</dbReference>
<dbReference type="PIRSF" id="PIRSF018147">
    <property type="entry name" value="ORMDL"/>
    <property type="match status" value="1"/>
</dbReference>
<organism>
    <name type="scientific">Bos taurus</name>
    <name type="common">Bovine</name>
    <dbReference type="NCBI Taxonomy" id="9913"/>
    <lineage>
        <taxon>Eukaryota</taxon>
        <taxon>Metazoa</taxon>
        <taxon>Chordata</taxon>
        <taxon>Craniata</taxon>
        <taxon>Vertebrata</taxon>
        <taxon>Euteleostomi</taxon>
        <taxon>Mammalia</taxon>
        <taxon>Eutheria</taxon>
        <taxon>Laurasiatheria</taxon>
        <taxon>Artiodactyla</taxon>
        <taxon>Ruminantia</taxon>
        <taxon>Pecora</taxon>
        <taxon>Bovidae</taxon>
        <taxon>Bovinae</taxon>
        <taxon>Bos</taxon>
    </lineage>
</organism>
<keyword id="KW-0256">Endoplasmic reticulum</keyword>
<keyword id="KW-0472">Membrane</keyword>
<keyword id="KW-1185">Reference proteome</keyword>
<keyword id="KW-0812">Transmembrane</keyword>
<keyword id="KW-1133">Transmembrane helix</keyword>
<proteinExistence type="evidence at transcript level"/>
<gene>
    <name type="primary">ORMDL2</name>
</gene>
<protein>
    <recommendedName>
        <fullName>ORM1-like protein 2</fullName>
    </recommendedName>
</protein>
<reference key="1">
    <citation type="journal article" date="2005" name="BMC Genomics">
        <title>Characterization of 954 bovine full-CDS cDNA sequences.</title>
        <authorList>
            <person name="Harhay G.P."/>
            <person name="Sonstegard T.S."/>
            <person name="Keele J.W."/>
            <person name="Heaton M.P."/>
            <person name="Clawson M.L."/>
            <person name="Snelling W.M."/>
            <person name="Wiedmann R.T."/>
            <person name="Van Tassell C.P."/>
            <person name="Smith T.P.L."/>
        </authorList>
    </citation>
    <scope>NUCLEOTIDE SEQUENCE [LARGE SCALE MRNA]</scope>
</reference>
<reference key="2">
    <citation type="submission" date="2005-11" db="EMBL/GenBank/DDBJ databases">
        <authorList>
            <consortium name="NIH - Mammalian Gene Collection (MGC) project"/>
        </authorList>
    </citation>
    <scope>NUCLEOTIDE SEQUENCE [LARGE SCALE MRNA]</scope>
    <source>
        <strain>Crossbred X Angus</strain>
        <tissue>Liver</tissue>
    </source>
</reference>
<name>ORML2_BOVIN</name>
<feature type="chain" id="PRO_0000215635" description="ORM1-like protein 2">
    <location>
        <begin position="1"/>
        <end position="153"/>
    </location>
</feature>
<feature type="topological domain" description="Cytoplasmic" evidence="3">
    <location>
        <begin position="1"/>
        <end position="21"/>
    </location>
</feature>
<feature type="transmembrane region" description="Helical" evidence="3">
    <location>
        <begin position="22"/>
        <end position="42"/>
    </location>
</feature>
<feature type="transmembrane region" description="Helical" evidence="3">
    <location>
        <begin position="43"/>
        <end position="63"/>
    </location>
</feature>
<feature type="topological domain" description="Cytoplasmic" evidence="3">
    <location>
        <begin position="64"/>
        <end position="105"/>
    </location>
</feature>
<feature type="transmembrane region" description="Helical" evidence="3">
    <location>
        <begin position="106"/>
        <end position="126"/>
    </location>
</feature>
<feature type="topological domain" description="Extracellular" evidence="3">
    <location>
        <begin position="127"/>
        <end position="153"/>
    </location>
</feature>
<evidence type="ECO:0000250" key="1">
    <source>
        <dbReference type="UniProtKB" id="Q53FV1"/>
    </source>
</evidence>
<evidence type="ECO:0000250" key="2">
    <source>
        <dbReference type="UniProtKB" id="Q8N138"/>
    </source>
</evidence>
<evidence type="ECO:0000255" key="3"/>
<evidence type="ECO:0000305" key="4"/>